<evidence type="ECO:0000250" key="1">
    <source>
        <dbReference type="UniProtKB" id="P0CC17"/>
    </source>
</evidence>
<evidence type="ECO:0000250" key="2">
    <source>
        <dbReference type="UniProtKB" id="P81382"/>
    </source>
</evidence>
<evidence type="ECO:0000269" key="3">
    <source>
    </source>
</evidence>
<evidence type="ECO:0000303" key="4">
    <source>
    </source>
</evidence>
<evidence type="ECO:0000305" key="5"/>
<evidence type="ECO:0000305" key="6">
    <source>
    </source>
</evidence>
<feature type="chain" id="PRO_0000273568" description="L-amino-acid oxidase">
    <location>
        <begin position="1"/>
        <end position="27" status="greater than"/>
    </location>
</feature>
<feature type="non-terminal residue" evidence="4">
    <location>
        <position position="27"/>
    </location>
</feature>
<comment type="function">
    <text evidence="1 3">Catalyzes an oxidative deamination of predominantly hydrophobic and aromatic L-amino acids, thus producing hydrogen peroxide that may contribute to the diverse toxic effects of this enzyme (PubMed:11368308). Shows activity on L-Leu (PubMed:11368308). Exhibits diverse biological activities, such as hemolysis, edema, apoptosis, as well as induction of platelet aggregation (PubMed:11368308). Effects of snake L-amino oxidases on platelets are controversial, since they either induce aggregation or inhibit agonist-induced aggregation (By similarity). These different effects are probably due to different experimental conditions. Unlike other snake venom L-amino acid oxidases, does not induce hemorrhage (PubMed:11368308). This protein may also have antibacterial and antiparasitic activities (By similarity).</text>
</comment>
<comment type="catalytic activity">
    <reaction evidence="3">
        <text>an L-alpha-amino acid + O2 + H2O = a 2-oxocarboxylate + H2O2 + NH4(+)</text>
        <dbReference type="Rhea" id="RHEA:13781"/>
        <dbReference type="ChEBI" id="CHEBI:15377"/>
        <dbReference type="ChEBI" id="CHEBI:15379"/>
        <dbReference type="ChEBI" id="CHEBI:16240"/>
        <dbReference type="ChEBI" id="CHEBI:28938"/>
        <dbReference type="ChEBI" id="CHEBI:35179"/>
        <dbReference type="ChEBI" id="CHEBI:59869"/>
        <dbReference type="EC" id="1.4.3.2"/>
    </reaction>
</comment>
<comment type="catalytic activity">
    <reaction evidence="3">
        <text>L-leucine + O2 + H2O = 4-methyl-2-oxopentanoate + H2O2 + NH4(+)</text>
        <dbReference type="Rhea" id="RHEA:60996"/>
        <dbReference type="ChEBI" id="CHEBI:15377"/>
        <dbReference type="ChEBI" id="CHEBI:15379"/>
        <dbReference type="ChEBI" id="CHEBI:16240"/>
        <dbReference type="ChEBI" id="CHEBI:17865"/>
        <dbReference type="ChEBI" id="CHEBI:28938"/>
        <dbReference type="ChEBI" id="CHEBI:57427"/>
    </reaction>
</comment>
<comment type="cofactor">
    <cofactor evidence="2">
        <name>FAD</name>
        <dbReference type="ChEBI" id="CHEBI:57692"/>
    </cofactor>
</comment>
<comment type="subunit">
    <text evidence="3">Homodimer; non-covalently linked.</text>
</comment>
<comment type="subcellular location">
    <subcellularLocation>
        <location evidence="3">Secreted</location>
    </subcellularLocation>
</comment>
<comment type="tissue specificity">
    <text evidence="6">Expressed by the venom gland.</text>
</comment>
<comment type="PTM">
    <text evidence="2">Contains 2 disulfide bonds.</text>
</comment>
<comment type="PTM">
    <text evidence="2">N-glycosylated.</text>
</comment>
<comment type="mass spectrometry" mass="58734.0" method="MALDI" evidence="3"/>
<comment type="similarity">
    <text evidence="5">Belongs to the flavin monoamine oxidase family. FIG1 subfamily.</text>
</comment>
<protein>
    <recommendedName>
        <fullName>L-amino-acid oxidase</fullName>
        <shortName>LAAO</shortName>
        <shortName evidence="4">LNV-LAO</shortName>
        <ecNumber evidence="3">1.4.3.2</ecNumber>
    </recommendedName>
</protein>
<name>OXLA_ERIMA</name>
<dbReference type="EC" id="1.4.3.2" evidence="3"/>
<dbReference type="SMR" id="P0C2D3"/>
<dbReference type="GO" id="GO:0005576">
    <property type="term" value="C:extracellular region"/>
    <property type="evidence" value="ECO:0007669"/>
    <property type="project" value="UniProtKB-SubCell"/>
</dbReference>
<dbReference type="GO" id="GO:0001716">
    <property type="term" value="F:L-amino-acid oxidase activity"/>
    <property type="evidence" value="ECO:0007669"/>
    <property type="project" value="UniProtKB-EC"/>
</dbReference>
<dbReference type="GO" id="GO:0090729">
    <property type="term" value="F:toxin activity"/>
    <property type="evidence" value="ECO:0007669"/>
    <property type="project" value="UniProtKB-KW"/>
</dbReference>
<dbReference type="GO" id="GO:0006915">
    <property type="term" value="P:apoptotic process"/>
    <property type="evidence" value="ECO:0007669"/>
    <property type="project" value="UniProtKB-KW"/>
</dbReference>
<dbReference type="GO" id="GO:0042742">
    <property type="term" value="P:defense response to bacterium"/>
    <property type="evidence" value="ECO:0007669"/>
    <property type="project" value="UniProtKB-KW"/>
</dbReference>
<dbReference type="GO" id="GO:0031640">
    <property type="term" value="P:killing of cells of another organism"/>
    <property type="evidence" value="ECO:0007669"/>
    <property type="project" value="UniProtKB-KW"/>
</dbReference>
<reference key="1">
    <citation type="journal article" date="2000" name="Arch. Biochem. Biophys.">
        <title>Isolation, structural, and functional characterization of an apoptosis-inducing L-amino acid oxidase from leaf-nosed viper (Eristocophis macmahoni) snake venom.</title>
        <authorList>
            <person name="Ali S.A."/>
            <person name="Stoeva S."/>
            <person name="Abbasi A."/>
            <person name="Alam J.M."/>
            <person name="Kayed R."/>
            <person name="Faigle M."/>
            <person name="Neumeister B."/>
            <person name="Voelter W."/>
        </authorList>
    </citation>
    <scope>PROTEIN SEQUENCE</scope>
    <scope>FUNCTION</scope>
    <scope>CATALYTIC ACTIVITY</scope>
    <scope>SUBUNIT</scope>
    <scope>MASS SPECTROMETRY</scope>
    <scope>SUBCELLULAR LOCATION</scope>
    <source>
        <tissue>Venom</tissue>
    </source>
</reference>
<sequence length="27" mass="3097">ADDKNPLEEAFREADYEVFLEIAKNGL</sequence>
<accession>P0C2D3</accession>
<proteinExistence type="evidence at protein level"/>
<organism>
    <name type="scientific">Eristicophis macmahoni</name>
    <name type="common">Leaf-nosed viper</name>
    <dbReference type="NCBI Taxonomy" id="110227"/>
    <lineage>
        <taxon>Eukaryota</taxon>
        <taxon>Metazoa</taxon>
        <taxon>Chordata</taxon>
        <taxon>Craniata</taxon>
        <taxon>Vertebrata</taxon>
        <taxon>Euteleostomi</taxon>
        <taxon>Lepidosauria</taxon>
        <taxon>Squamata</taxon>
        <taxon>Bifurcata</taxon>
        <taxon>Unidentata</taxon>
        <taxon>Episquamata</taxon>
        <taxon>Toxicofera</taxon>
        <taxon>Serpentes</taxon>
        <taxon>Colubroidea</taxon>
        <taxon>Viperidae</taxon>
        <taxon>Viperinae</taxon>
        <taxon>Eristicophis</taxon>
    </lineage>
</organism>
<keyword id="KW-0044">Antibiotic</keyword>
<keyword id="KW-0929">Antimicrobial</keyword>
<keyword id="KW-0053">Apoptosis</keyword>
<keyword id="KW-0204">Cytolysis</keyword>
<keyword id="KW-0903">Direct protein sequencing</keyword>
<keyword id="KW-1015">Disulfide bond</keyword>
<keyword id="KW-0274">FAD</keyword>
<keyword id="KW-0285">Flavoprotein</keyword>
<keyword id="KW-0325">Glycoprotein</keyword>
<keyword id="KW-0354">Hemolysis</keyword>
<keyword id="KW-1199">Hemostasis impairing toxin</keyword>
<keyword id="KW-0560">Oxidoreductase</keyword>
<keyword id="KW-1202">Platelet aggregation activating toxin</keyword>
<keyword id="KW-0964">Secreted</keyword>
<keyword id="KW-0800">Toxin</keyword>